<name>NILP1_ARATH</name>
<comment type="function">
    <text evidence="2">Involved in polyamine biosynthesis (PubMed:12435743). Catalyzes the hydrolysis of N-carbamoylputrescine to produce putrescine and ammonia (PubMed:12435743).</text>
</comment>
<comment type="catalytic activity">
    <reaction evidence="2">
        <text>N-carbamoylputrescine + H2O + 2 H(+) = putrescine + NH4(+) + CO2</text>
        <dbReference type="Rhea" id="RHEA:22284"/>
        <dbReference type="ChEBI" id="CHEBI:15377"/>
        <dbReference type="ChEBI" id="CHEBI:15378"/>
        <dbReference type="ChEBI" id="CHEBI:16526"/>
        <dbReference type="ChEBI" id="CHEBI:28938"/>
        <dbReference type="ChEBI" id="CHEBI:58318"/>
        <dbReference type="ChEBI" id="CHEBI:326268"/>
        <dbReference type="EC" id="3.5.1.53"/>
    </reaction>
    <physiologicalReaction direction="left-to-right" evidence="2">
        <dbReference type="Rhea" id="RHEA:22285"/>
    </physiologicalReaction>
</comment>
<comment type="biophysicochemical properties">
    <kinetics>
        <KM evidence="2">135 uM for N-carbamoylputrescine</KM>
        <Vmax evidence="2">86.0 nmol/sec/mg enzyme</Vmax>
        <text>Determined for isoform 2.</text>
    </kinetics>
    <phDependence>
        <text evidence="2">Optimum pH is 8-9.</text>
    </phDependence>
    <temperatureDependence>
        <text evidence="2">Optimum temperature is 40 degrees Celsius.</text>
    </temperatureDependence>
</comment>
<comment type="pathway">
    <text evidence="4">Amine and polyamine biosynthesis; putrescine biosynthesis via agmatine pathway; putrescine from N-carbamoylputrescine (amidase route): step 1/1.</text>
</comment>
<comment type="subunit">
    <text evidence="2">Homooctamer (isoform 2).</text>
</comment>
<comment type="alternative products">
    <event type="alternative splicing"/>
    <isoform>
        <id>Q8VYF5-2</id>
        <name>2</name>
        <sequence type="displayed"/>
    </isoform>
    <isoform>
        <id>Q8VYF5-1</id>
        <name>1</name>
        <sequence type="described" ref="VSP_060388"/>
    </isoform>
</comment>
<comment type="tissue specificity">
    <molecule>Isoform 2</molecule>
    <text evidence="2">Expressed in roots, stems, leaves and flowers.</text>
</comment>
<comment type="induction">
    <molecule>Isoform 2</molecule>
    <text evidence="2">Not induced by osmotic stress.</text>
</comment>
<comment type="miscellaneous">
    <molecule>Isoform 2</molecule>
    <text>May be due to a competing donor splice site. Used for enzyme characterization.</text>
</comment>
<comment type="similarity">
    <text evidence="4">Belongs to the carbon-nitrogen hydrolase superfamily.</text>
</comment>
<keyword id="KW-0025">Alternative splicing</keyword>
<keyword id="KW-0378">Hydrolase</keyword>
<keyword id="KW-0620">Polyamine biosynthesis</keyword>
<keyword id="KW-1185">Reference proteome</keyword>
<sequence>METEGRRREVVVSSLQFACSDDISTNVAAAERLVREAHAKGANIILIQELFEGYYFCQAQREDFFKRAKPYKNHPTIARMQKLAKELGVVIPVSFFEEANTAHYNSIAIIDADGTDLGIYRKSHIPDGPGYQEKFYFNPGDTGFKVFQTKFAKIGVAICWDQWFPEAARAMVLQGAEILFYPTAIGSEPQDQGLDSRDHWRRVMQGHAGANVVPLVASNRIGKEIIETEHGPSQITFYGTSFIAGPTGEIVAEADDKSEAVLVAQFDLDMIKSKRQSWGVFRDRRPDLYKVLLTMDGNL</sequence>
<accession>Q8VYF5</accession>
<accession>Q9ZQH4</accession>
<proteinExistence type="evidence at protein level"/>
<reference key="1">
    <citation type="journal article" date="1999" name="Nature">
        <title>Sequence and analysis of chromosome 2 of the plant Arabidopsis thaliana.</title>
        <authorList>
            <person name="Lin X."/>
            <person name="Kaul S."/>
            <person name="Rounsley S.D."/>
            <person name="Shea T.P."/>
            <person name="Benito M.-I."/>
            <person name="Town C.D."/>
            <person name="Fujii C.Y."/>
            <person name="Mason T.M."/>
            <person name="Bowman C.L."/>
            <person name="Barnstead M.E."/>
            <person name="Feldblyum T.V."/>
            <person name="Buell C.R."/>
            <person name="Ketchum K.A."/>
            <person name="Lee J.J."/>
            <person name="Ronning C.M."/>
            <person name="Koo H.L."/>
            <person name="Moffat K.S."/>
            <person name="Cronin L.A."/>
            <person name="Shen M."/>
            <person name="Pai G."/>
            <person name="Van Aken S."/>
            <person name="Umayam L."/>
            <person name="Tallon L.J."/>
            <person name="Gill J.E."/>
            <person name="Adams M.D."/>
            <person name="Carrera A.J."/>
            <person name="Creasy T.H."/>
            <person name="Goodman H.M."/>
            <person name="Somerville C.R."/>
            <person name="Copenhaver G.P."/>
            <person name="Preuss D."/>
            <person name="Nierman W.C."/>
            <person name="White O."/>
            <person name="Eisen J.A."/>
            <person name="Salzberg S.L."/>
            <person name="Fraser C.M."/>
            <person name="Venter J.C."/>
        </authorList>
    </citation>
    <scope>NUCLEOTIDE SEQUENCE [LARGE SCALE GENOMIC DNA]</scope>
    <source>
        <strain>cv. Columbia</strain>
    </source>
</reference>
<reference key="2">
    <citation type="journal article" date="2017" name="Plant J.">
        <title>Araport11: a complete reannotation of the Arabidopsis thaliana reference genome.</title>
        <authorList>
            <person name="Cheng C.Y."/>
            <person name="Krishnakumar V."/>
            <person name="Chan A.P."/>
            <person name="Thibaud-Nissen F."/>
            <person name="Schobel S."/>
            <person name="Town C.D."/>
        </authorList>
    </citation>
    <scope>GENOME REANNOTATION</scope>
    <source>
        <strain>cv. Columbia</strain>
    </source>
</reference>
<reference key="3">
    <citation type="journal article" date="2003" name="Science">
        <title>Empirical analysis of transcriptional activity in the Arabidopsis genome.</title>
        <authorList>
            <person name="Yamada K."/>
            <person name="Lim J."/>
            <person name="Dale J.M."/>
            <person name="Chen H."/>
            <person name="Shinn P."/>
            <person name="Palm C.J."/>
            <person name="Southwick A.M."/>
            <person name="Wu H.C."/>
            <person name="Kim C.J."/>
            <person name="Nguyen M."/>
            <person name="Pham P.K."/>
            <person name="Cheuk R.F."/>
            <person name="Karlin-Newmann G."/>
            <person name="Liu S.X."/>
            <person name="Lam B."/>
            <person name="Sakano H."/>
            <person name="Wu T."/>
            <person name="Yu G."/>
            <person name="Miranda M."/>
            <person name="Quach H.L."/>
            <person name="Tripp M."/>
            <person name="Chang C.H."/>
            <person name="Lee J.M."/>
            <person name="Toriumi M.J."/>
            <person name="Chan M.M."/>
            <person name="Tang C.C."/>
            <person name="Onodera C.S."/>
            <person name="Deng J.M."/>
            <person name="Akiyama K."/>
            <person name="Ansari Y."/>
            <person name="Arakawa T."/>
            <person name="Banh J."/>
            <person name="Banno F."/>
            <person name="Bowser L."/>
            <person name="Brooks S.Y."/>
            <person name="Carninci P."/>
            <person name="Chao Q."/>
            <person name="Choy N."/>
            <person name="Enju A."/>
            <person name="Goldsmith A.D."/>
            <person name="Gurjal M."/>
            <person name="Hansen N.F."/>
            <person name="Hayashizaki Y."/>
            <person name="Johnson-Hopson C."/>
            <person name="Hsuan V.W."/>
            <person name="Iida K."/>
            <person name="Karnes M."/>
            <person name="Khan S."/>
            <person name="Koesema E."/>
            <person name="Ishida J."/>
            <person name="Jiang P.X."/>
            <person name="Jones T."/>
            <person name="Kawai J."/>
            <person name="Kamiya A."/>
            <person name="Meyers C."/>
            <person name="Nakajima M."/>
            <person name="Narusaka M."/>
            <person name="Seki M."/>
            <person name="Sakurai T."/>
            <person name="Satou M."/>
            <person name="Tamse R."/>
            <person name="Vaysberg M."/>
            <person name="Wallender E.K."/>
            <person name="Wong C."/>
            <person name="Yamamura Y."/>
            <person name="Yuan S."/>
            <person name="Shinozaki K."/>
            <person name="Davis R.W."/>
            <person name="Theologis A."/>
            <person name="Ecker J.R."/>
        </authorList>
    </citation>
    <scope>NUCLEOTIDE SEQUENCE [LARGE SCALE MRNA] (ISOFORM 1)</scope>
    <source>
        <strain>cv. Columbia</strain>
    </source>
</reference>
<reference key="4">
    <citation type="submission" date="2002-03" db="EMBL/GenBank/DDBJ databases">
        <title>Full-length cDNA from Arabidopsis thaliana.</title>
        <authorList>
            <person name="Brover V.V."/>
            <person name="Troukhan M.E."/>
            <person name="Alexandrov N.A."/>
            <person name="Lu Y.-P."/>
            <person name="Flavell R.B."/>
            <person name="Feldmann K.A."/>
        </authorList>
    </citation>
    <scope>NUCLEOTIDE SEQUENCE [LARGE SCALE MRNA] (ISOFORM 2)</scope>
</reference>
<reference key="5">
    <citation type="journal article" date="2003" name="J. Biol. Chem.">
        <title>Plant C-N hydrolases and the identification of a plant N-carbamoylputrescine amidohydrolase involved in polyamine biosynthesis.</title>
        <authorList>
            <person name="Piotrowski M."/>
            <person name="Janowitz T."/>
            <person name="Kneifel H."/>
        </authorList>
    </citation>
    <scope>FUNCTION</scope>
    <scope>SUBUNIT</scope>
    <scope>INDUCTION</scope>
    <scope>TISSUE SPECIFICITY</scope>
    <scope>BIOPHYSICOCHEMICAL PROPERTIES</scope>
    <scope>GENE FAMILY</scope>
    <scope>NOMENCLATURE (ISOFORM 2)</scope>
</reference>
<evidence type="ECO:0000255" key="1">
    <source>
        <dbReference type="PROSITE-ProRule" id="PRU00054"/>
    </source>
</evidence>
<evidence type="ECO:0000269" key="2">
    <source>
    </source>
</evidence>
<evidence type="ECO:0000303" key="3">
    <source>
    </source>
</evidence>
<evidence type="ECO:0000305" key="4"/>
<organism>
    <name type="scientific">Arabidopsis thaliana</name>
    <name type="common">Mouse-ear cress</name>
    <dbReference type="NCBI Taxonomy" id="3702"/>
    <lineage>
        <taxon>Eukaryota</taxon>
        <taxon>Viridiplantae</taxon>
        <taxon>Streptophyta</taxon>
        <taxon>Embryophyta</taxon>
        <taxon>Tracheophyta</taxon>
        <taxon>Spermatophyta</taxon>
        <taxon>Magnoliopsida</taxon>
        <taxon>eudicotyledons</taxon>
        <taxon>Gunneridae</taxon>
        <taxon>Pentapetalae</taxon>
        <taxon>rosids</taxon>
        <taxon>malvids</taxon>
        <taxon>Brassicales</taxon>
        <taxon>Brassicaceae</taxon>
        <taxon>Camelineae</taxon>
        <taxon>Arabidopsis</taxon>
    </lineage>
</organism>
<feature type="chain" id="PRO_0000261601" description="N-carbamoylputrescine amidase">
    <location>
        <begin position="1"/>
        <end position="299"/>
    </location>
</feature>
<feature type="domain" description="CN hydrolase" evidence="1">
    <location>
        <begin position="10"/>
        <end position="268"/>
    </location>
</feature>
<feature type="active site" description="Proton acceptor" evidence="1">
    <location>
        <position position="49"/>
    </location>
</feature>
<feature type="active site" description="Proton donor" evidence="1">
    <location>
        <position position="122"/>
    </location>
</feature>
<feature type="active site" description="Nucleophile" evidence="1">
    <location>
        <position position="159"/>
    </location>
</feature>
<feature type="splice variant" id="VSP_060388" description="In isoform 1." evidence="4">
    <original>R</original>
    <variation>RFVSLSSSLPLSNYQSLPSSSSFKFPYA</variation>
    <location>
        <position position="32"/>
    </location>
</feature>
<gene>
    <name evidence="3" type="primary">CPA</name>
    <name evidence="3" type="synonym">NLP1</name>
    <name type="ordered locus">At2g27450</name>
    <name type="ORF">F10A12.13</name>
</gene>
<dbReference type="EC" id="3.5.1.53" evidence="2"/>
<dbReference type="EMBL" id="AC006232">
    <property type="protein sequence ID" value="AAD15597.2"/>
    <property type="molecule type" value="Genomic_DNA"/>
</dbReference>
<dbReference type="EMBL" id="CP002685">
    <property type="protein sequence ID" value="AEC07997.1"/>
    <property type="molecule type" value="Genomic_DNA"/>
</dbReference>
<dbReference type="EMBL" id="CP002685">
    <property type="protein sequence ID" value="AEC07998.1"/>
    <property type="molecule type" value="Genomic_DNA"/>
</dbReference>
<dbReference type="EMBL" id="AY072113">
    <property type="protein sequence ID" value="AAL59935.1"/>
    <property type="molecule type" value="mRNA"/>
</dbReference>
<dbReference type="EMBL" id="AY122963">
    <property type="protein sequence ID" value="AAM67496.1"/>
    <property type="molecule type" value="mRNA"/>
</dbReference>
<dbReference type="EMBL" id="AY086056">
    <property type="protein sequence ID" value="AAM63266.1"/>
    <property type="molecule type" value="mRNA"/>
</dbReference>
<dbReference type="PIR" id="A84673">
    <property type="entry name" value="A84673"/>
</dbReference>
<dbReference type="RefSeq" id="NP_565650.1">
    <molecule id="Q8VYF5-2"/>
    <property type="nucleotide sequence ID" value="NM_128305.2"/>
</dbReference>
<dbReference type="RefSeq" id="NP_850101.1">
    <molecule id="Q8VYF5-1"/>
    <property type="nucleotide sequence ID" value="NM_179770.1"/>
</dbReference>
<dbReference type="SMR" id="Q8VYF5"/>
<dbReference type="BioGRID" id="2642">
    <property type="interactions" value="3"/>
</dbReference>
<dbReference type="FunCoup" id="Q8VYF5">
    <property type="interactions" value="363"/>
</dbReference>
<dbReference type="STRING" id="3702.Q8VYF5"/>
<dbReference type="PaxDb" id="3702-AT2G27450.2"/>
<dbReference type="ProteomicsDB" id="250533">
    <molecule id="Q8VYF5-2"/>
</dbReference>
<dbReference type="EnsemblPlants" id="AT2G27450.1">
    <molecule id="Q8VYF5-2"/>
    <property type="protein sequence ID" value="AT2G27450.1"/>
    <property type="gene ID" value="AT2G27450"/>
</dbReference>
<dbReference type="EnsemblPlants" id="AT2G27450.2">
    <molecule id="Q8VYF5-1"/>
    <property type="protein sequence ID" value="AT2G27450.2"/>
    <property type="gene ID" value="AT2G27450"/>
</dbReference>
<dbReference type="GeneID" id="817290"/>
<dbReference type="Gramene" id="AT2G27450.1">
    <molecule id="Q8VYF5-2"/>
    <property type="protein sequence ID" value="AT2G27450.1"/>
    <property type="gene ID" value="AT2G27450"/>
</dbReference>
<dbReference type="Gramene" id="AT2G27450.2">
    <molecule id="Q8VYF5-1"/>
    <property type="protein sequence ID" value="AT2G27450.2"/>
    <property type="gene ID" value="AT2G27450"/>
</dbReference>
<dbReference type="KEGG" id="ath:AT2G27450"/>
<dbReference type="Araport" id="AT2G27450"/>
<dbReference type="TAIR" id="AT2G27450">
    <property type="gene designation" value="NLP1"/>
</dbReference>
<dbReference type="eggNOG" id="KOG0806">
    <property type="taxonomic scope" value="Eukaryota"/>
</dbReference>
<dbReference type="InParanoid" id="Q8VYF5"/>
<dbReference type="OMA" id="APYFCQV"/>
<dbReference type="PhylomeDB" id="Q8VYF5"/>
<dbReference type="BioCyc" id="MetaCyc:MONOMER-1841"/>
<dbReference type="SABIO-RK" id="Q8VYF5"/>
<dbReference type="UniPathway" id="UPA00534">
    <property type="reaction ID" value="UER00286"/>
</dbReference>
<dbReference type="PRO" id="PR:Q8VYF5"/>
<dbReference type="Proteomes" id="UP000006548">
    <property type="component" value="Chromosome 2"/>
</dbReference>
<dbReference type="ExpressionAtlas" id="Q8VYF5">
    <property type="expression patterns" value="baseline and differential"/>
</dbReference>
<dbReference type="GO" id="GO:0050126">
    <property type="term" value="F:N-carbamoylputrescine amidase activity"/>
    <property type="evidence" value="ECO:0000314"/>
    <property type="project" value="TAIR"/>
</dbReference>
<dbReference type="GO" id="GO:0009446">
    <property type="term" value="P:putrescine biosynthetic process"/>
    <property type="evidence" value="ECO:0000304"/>
    <property type="project" value="TAIR"/>
</dbReference>
<dbReference type="GO" id="GO:0033388">
    <property type="term" value="P:putrescine biosynthetic process from arginine"/>
    <property type="evidence" value="ECO:0007669"/>
    <property type="project" value="UniProtKB-UniPathway"/>
</dbReference>
<dbReference type="CDD" id="cd07573">
    <property type="entry name" value="CPA"/>
    <property type="match status" value="1"/>
</dbReference>
<dbReference type="FunFam" id="3.60.110.10:FF:000012">
    <property type="entry name" value="N-carbamoylputrescine amidohydrolase, putative"/>
    <property type="match status" value="1"/>
</dbReference>
<dbReference type="Gene3D" id="3.60.110.10">
    <property type="entry name" value="Carbon-nitrogen hydrolase"/>
    <property type="match status" value="1"/>
</dbReference>
<dbReference type="InterPro" id="IPR050345">
    <property type="entry name" value="Aliph_Amidase/BUP"/>
</dbReference>
<dbReference type="InterPro" id="IPR003010">
    <property type="entry name" value="C-N_Hydrolase"/>
</dbReference>
<dbReference type="InterPro" id="IPR036526">
    <property type="entry name" value="C-N_Hydrolase_sf"/>
</dbReference>
<dbReference type="InterPro" id="IPR017755">
    <property type="entry name" value="N-carbamoylputrescine_amidase"/>
</dbReference>
<dbReference type="NCBIfam" id="TIGR03381">
    <property type="entry name" value="agmatine_aguB"/>
    <property type="match status" value="1"/>
</dbReference>
<dbReference type="PANTHER" id="PTHR43674:SF2">
    <property type="entry name" value="BETA-UREIDOPROPIONASE"/>
    <property type="match status" value="1"/>
</dbReference>
<dbReference type="PANTHER" id="PTHR43674">
    <property type="entry name" value="NITRILASE C965.09-RELATED"/>
    <property type="match status" value="1"/>
</dbReference>
<dbReference type="Pfam" id="PF00795">
    <property type="entry name" value="CN_hydrolase"/>
    <property type="match status" value="1"/>
</dbReference>
<dbReference type="SUPFAM" id="SSF56317">
    <property type="entry name" value="Carbon-nitrogen hydrolase"/>
    <property type="match status" value="1"/>
</dbReference>
<dbReference type="PROSITE" id="PS50263">
    <property type="entry name" value="CN_HYDROLASE"/>
    <property type="match status" value="1"/>
</dbReference>
<protein>
    <recommendedName>
        <fullName evidence="3">N-carbamoylputrescine amidase</fullName>
        <ecNumber evidence="2">3.5.1.53</ecNumber>
    </recommendedName>
    <alternativeName>
        <fullName evidence="3">Nitrilase-like protein 1</fullName>
    </alternativeName>
</protein>